<reference key="1">
    <citation type="submission" date="2007-03" db="EMBL/GenBank/DDBJ databases">
        <title>Complete sequence of chromosome 1 of Burkholderia vietnamiensis G4.</title>
        <authorList>
            <consortium name="US DOE Joint Genome Institute"/>
            <person name="Copeland A."/>
            <person name="Lucas S."/>
            <person name="Lapidus A."/>
            <person name="Barry K."/>
            <person name="Detter J.C."/>
            <person name="Glavina del Rio T."/>
            <person name="Hammon N."/>
            <person name="Israni S."/>
            <person name="Dalin E."/>
            <person name="Tice H."/>
            <person name="Pitluck S."/>
            <person name="Chain P."/>
            <person name="Malfatti S."/>
            <person name="Shin M."/>
            <person name="Vergez L."/>
            <person name="Schmutz J."/>
            <person name="Larimer F."/>
            <person name="Land M."/>
            <person name="Hauser L."/>
            <person name="Kyrpides N."/>
            <person name="Tiedje J."/>
            <person name="Richardson P."/>
        </authorList>
    </citation>
    <scope>NUCLEOTIDE SEQUENCE [LARGE SCALE GENOMIC DNA]</scope>
    <source>
        <strain>G4 / LMG 22486</strain>
    </source>
</reference>
<dbReference type="EC" id="2.1.2.11" evidence="1"/>
<dbReference type="EMBL" id="CP000614">
    <property type="protein sequence ID" value="ABO53727.1"/>
    <property type="molecule type" value="Genomic_DNA"/>
</dbReference>
<dbReference type="SMR" id="A4JBS4"/>
<dbReference type="KEGG" id="bvi:Bcep1808_0715"/>
<dbReference type="eggNOG" id="COG0413">
    <property type="taxonomic scope" value="Bacteria"/>
</dbReference>
<dbReference type="HOGENOM" id="CLU_036645_1_0_4"/>
<dbReference type="UniPathway" id="UPA00028">
    <property type="reaction ID" value="UER00003"/>
</dbReference>
<dbReference type="Proteomes" id="UP000002287">
    <property type="component" value="Chromosome 1"/>
</dbReference>
<dbReference type="GO" id="GO:0005737">
    <property type="term" value="C:cytoplasm"/>
    <property type="evidence" value="ECO:0007669"/>
    <property type="project" value="UniProtKB-SubCell"/>
</dbReference>
<dbReference type="GO" id="GO:0003864">
    <property type="term" value="F:3-methyl-2-oxobutanoate hydroxymethyltransferase activity"/>
    <property type="evidence" value="ECO:0007669"/>
    <property type="project" value="UniProtKB-UniRule"/>
</dbReference>
<dbReference type="GO" id="GO:0000287">
    <property type="term" value="F:magnesium ion binding"/>
    <property type="evidence" value="ECO:0007669"/>
    <property type="project" value="TreeGrafter"/>
</dbReference>
<dbReference type="GO" id="GO:0015940">
    <property type="term" value="P:pantothenate biosynthetic process"/>
    <property type="evidence" value="ECO:0007669"/>
    <property type="project" value="UniProtKB-UniRule"/>
</dbReference>
<dbReference type="CDD" id="cd06557">
    <property type="entry name" value="KPHMT-like"/>
    <property type="match status" value="1"/>
</dbReference>
<dbReference type="FunFam" id="3.20.20.60:FF:000003">
    <property type="entry name" value="3-methyl-2-oxobutanoate hydroxymethyltransferase"/>
    <property type="match status" value="1"/>
</dbReference>
<dbReference type="Gene3D" id="3.20.20.60">
    <property type="entry name" value="Phosphoenolpyruvate-binding domains"/>
    <property type="match status" value="1"/>
</dbReference>
<dbReference type="HAMAP" id="MF_00156">
    <property type="entry name" value="PanB"/>
    <property type="match status" value="1"/>
</dbReference>
<dbReference type="InterPro" id="IPR003700">
    <property type="entry name" value="Pantoate_hydroxy_MeTrfase"/>
</dbReference>
<dbReference type="InterPro" id="IPR015813">
    <property type="entry name" value="Pyrv/PenolPyrv_kinase-like_dom"/>
</dbReference>
<dbReference type="InterPro" id="IPR040442">
    <property type="entry name" value="Pyrv_kinase-like_dom_sf"/>
</dbReference>
<dbReference type="NCBIfam" id="TIGR00222">
    <property type="entry name" value="panB"/>
    <property type="match status" value="1"/>
</dbReference>
<dbReference type="NCBIfam" id="NF001452">
    <property type="entry name" value="PRK00311.1"/>
    <property type="match status" value="1"/>
</dbReference>
<dbReference type="PANTHER" id="PTHR20881">
    <property type="entry name" value="3-METHYL-2-OXOBUTANOATE HYDROXYMETHYLTRANSFERASE"/>
    <property type="match status" value="1"/>
</dbReference>
<dbReference type="PANTHER" id="PTHR20881:SF0">
    <property type="entry name" value="3-METHYL-2-OXOBUTANOATE HYDROXYMETHYLTRANSFERASE"/>
    <property type="match status" value="1"/>
</dbReference>
<dbReference type="Pfam" id="PF02548">
    <property type="entry name" value="Pantoate_transf"/>
    <property type="match status" value="1"/>
</dbReference>
<dbReference type="PIRSF" id="PIRSF000388">
    <property type="entry name" value="Pantoate_hydroxy_MeTrfase"/>
    <property type="match status" value="1"/>
</dbReference>
<dbReference type="SUPFAM" id="SSF51621">
    <property type="entry name" value="Phosphoenolpyruvate/pyruvate domain"/>
    <property type="match status" value="1"/>
</dbReference>
<gene>
    <name evidence="1" type="primary">panB</name>
    <name type="ordered locus">Bcep1808_0715</name>
</gene>
<comment type="function">
    <text evidence="1">Catalyzes the reversible reaction in which hydroxymethyl group from 5,10-methylenetetrahydrofolate is transferred onto alpha-ketoisovalerate to form ketopantoate.</text>
</comment>
<comment type="catalytic activity">
    <reaction evidence="1">
        <text>3-methyl-2-oxobutanoate + (6R)-5,10-methylene-5,6,7,8-tetrahydrofolate + H2O = 2-dehydropantoate + (6S)-5,6,7,8-tetrahydrofolate</text>
        <dbReference type="Rhea" id="RHEA:11824"/>
        <dbReference type="ChEBI" id="CHEBI:11561"/>
        <dbReference type="ChEBI" id="CHEBI:11851"/>
        <dbReference type="ChEBI" id="CHEBI:15377"/>
        <dbReference type="ChEBI" id="CHEBI:15636"/>
        <dbReference type="ChEBI" id="CHEBI:57453"/>
        <dbReference type="EC" id="2.1.2.11"/>
    </reaction>
</comment>
<comment type="cofactor">
    <cofactor evidence="1">
        <name>Mg(2+)</name>
        <dbReference type="ChEBI" id="CHEBI:18420"/>
    </cofactor>
    <text evidence="1">Binds 1 Mg(2+) ion per subunit.</text>
</comment>
<comment type="pathway">
    <text evidence="1">Cofactor biosynthesis; (R)-pantothenate biosynthesis; (R)-pantoate from 3-methyl-2-oxobutanoate: step 1/2.</text>
</comment>
<comment type="subunit">
    <text evidence="1">Homodecamer; pentamer of dimers.</text>
</comment>
<comment type="subcellular location">
    <subcellularLocation>
        <location evidence="1">Cytoplasm</location>
    </subcellularLocation>
</comment>
<comment type="similarity">
    <text evidence="1">Belongs to the PanB family.</text>
</comment>
<name>PANB_BURVG</name>
<proteinExistence type="inferred from homology"/>
<protein>
    <recommendedName>
        <fullName evidence="1">3-methyl-2-oxobutanoate hydroxymethyltransferase</fullName>
        <ecNumber evidence="1">2.1.2.11</ecNumber>
    </recommendedName>
    <alternativeName>
        <fullName evidence="1">Ketopantoate hydroxymethyltransferase</fullName>
        <shortName evidence="1">KPHMT</shortName>
    </alternativeName>
</protein>
<accession>A4JBS4</accession>
<evidence type="ECO:0000255" key="1">
    <source>
        <dbReference type="HAMAP-Rule" id="MF_00156"/>
    </source>
</evidence>
<keyword id="KW-0963">Cytoplasm</keyword>
<keyword id="KW-0460">Magnesium</keyword>
<keyword id="KW-0479">Metal-binding</keyword>
<keyword id="KW-0566">Pantothenate biosynthesis</keyword>
<keyword id="KW-0808">Transferase</keyword>
<feature type="chain" id="PRO_1000011367" description="3-methyl-2-oxobutanoate hydroxymethyltransferase">
    <location>
        <begin position="1"/>
        <end position="271"/>
    </location>
</feature>
<feature type="active site" description="Proton acceptor" evidence="1">
    <location>
        <position position="189"/>
    </location>
</feature>
<feature type="binding site" evidence="1">
    <location>
        <begin position="53"/>
        <end position="54"/>
    </location>
    <ligand>
        <name>3-methyl-2-oxobutanoate</name>
        <dbReference type="ChEBI" id="CHEBI:11851"/>
    </ligand>
</feature>
<feature type="binding site" evidence="1">
    <location>
        <position position="53"/>
    </location>
    <ligand>
        <name>Mg(2+)</name>
        <dbReference type="ChEBI" id="CHEBI:18420"/>
    </ligand>
</feature>
<feature type="binding site" evidence="1">
    <location>
        <position position="92"/>
    </location>
    <ligand>
        <name>3-methyl-2-oxobutanoate</name>
        <dbReference type="ChEBI" id="CHEBI:11851"/>
    </ligand>
</feature>
<feature type="binding site" evidence="1">
    <location>
        <position position="92"/>
    </location>
    <ligand>
        <name>Mg(2+)</name>
        <dbReference type="ChEBI" id="CHEBI:18420"/>
    </ligand>
</feature>
<feature type="binding site" evidence="1">
    <location>
        <position position="120"/>
    </location>
    <ligand>
        <name>3-methyl-2-oxobutanoate</name>
        <dbReference type="ChEBI" id="CHEBI:11851"/>
    </ligand>
</feature>
<feature type="binding site" evidence="1">
    <location>
        <position position="122"/>
    </location>
    <ligand>
        <name>Mg(2+)</name>
        <dbReference type="ChEBI" id="CHEBI:18420"/>
    </ligand>
</feature>
<organism>
    <name type="scientific">Burkholderia vietnamiensis (strain G4 / LMG 22486)</name>
    <name type="common">Burkholderia cepacia (strain R1808)</name>
    <dbReference type="NCBI Taxonomy" id="269482"/>
    <lineage>
        <taxon>Bacteria</taxon>
        <taxon>Pseudomonadati</taxon>
        <taxon>Pseudomonadota</taxon>
        <taxon>Betaproteobacteria</taxon>
        <taxon>Burkholderiales</taxon>
        <taxon>Burkholderiaceae</taxon>
        <taxon>Burkholderia</taxon>
        <taxon>Burkholderia cepacia complex</taxon>
    </lineage>
</organism>
<sequence>MTYLQESSRPAITVPKLQAMREAGEKIAMLTCYDASFAALLDRAGTDVLLIGDSLGNVLQGHTTTLPVSLDDIAYHTACVARVQPRALVVADLPFGTYGTPAEAFAHSVALMRAGAQMVKLEGGEWLADTIRFLVERSVPVCAHLGLTPQSVHAFGGFKVQGRTEAGAAQLLRDARAIEDAGAQLVVLEAVPTLVAAEVTHMLKIPTIGIGAGLDCSGQVLVLHDMLGIFPGKRPRFVKDFMQGQPSIQAAVEAYVSAVKECTFPGPEHSF</sequence>